<organism>
    <name type="scientific">Rickettsia akari (strain Hartford)</name>
    <dbReference type="NCBI Taxonomy" id="293614"/>
    <lineage>
        <taxon>Bacteria</taxon>
        <taxon>Pseudomonadati</taxon>
        <taxon>Pseudomonadota</taxon>
        <taxon>Alphaproteobacteria</taxon>
        <taxon>Rickettsiales</taxon>
        <taxon>Rickettsiaceae</taxon>
        <taxon>Rickettsieae</taxon>
        <taxon>Rickettsia</taxon>
        <taxon>spotted fever group</taxon>
    </lineage>
</organism>
<protein>
    <recommendedName>
        <fullName evidence="1">Protoheme IX farnesyltransferase</fullName>
        <ecNumber evidence="1">2.5.1.141</ecNumber>
    </recommendedName>
    <alternativeName>
        <fullName evidence="1">Heme B farnesyltransferase</fullName>
    </alternativeName>
    <alternativeName>
        <fullName evidence="1">Heme O synthase</fullName>
    </alternativeName>
</protein>
<comment type="function">
    <text evidence="1">Converts heme B (protoheme IX) to heme O by substitution of the vinyl group on carbon 2 of heme B porphyrin ring with a hydroxyethyl farnesyl side group.</text>
</comment>
<comment type="catalytic activity">
    <reaction evidence="1">
        <text>heme b + (2E,6E)-farnesyl diphosphate + H2O = Fe(II)-heme o + diphosphate</text>
        <dbReference type="Rhea" id="RHEA:28070"/>
        <dbReference type="ChEBI" id="CHEBI:15377"/>
        <dbReference type="ChEBI" id="CHEBI:33019"/>
        <dbReference type="ChEBI" id="CHEBI:60344"/>
        <dbReference type="ChEBI" id="CHEBI:60530"/>
        <dbReference type="ChEBI" id="CHEBI:175763"/>
        <dbReference type="EC" id="2.5.1.141"/>
    </reaction>
</comment>
<comment type="pathway">
    <text evidence="1">Porphyrin-containing compound metabolism; heme O biosynthesis; heme O from protoheme: step 1/1.</text>
</comment>
<comment type="subcellular location">
    <subcellularLocation>
        <location evidence="1">Cell inner membrane</location>
        <topology evidence="1">Multi-pass membrane protein</topology>
    </subcellularLocation>
</comment>
<comment type="miscellaneous">
    <text evidence="1">Carbon 2 of the heme B porphyrin ring is defined according to the Fischer nomenclature.</text>
</comment>
<comment type="similarity">
    <text evidence="1">Belongs to the UbiA prenyltransferase family. Protoheme IX farnesyltransferase subfamily.</text>
</comment>
<evidence type="ECO:0000255" key="1">
    <source>
        <dbReference type="HAMAP-Rule" id="MF_00154"/>
    </source>
</evidence>
<dbReference type="EC" id="2.5.1.141" evidence="1"/>
<dbReference type="EMBL" id="CP000847">
    <property type="protein sequence ID" value="ABV74811.1"/>
    <property type="molecule type" value="Genomic_DNA"/>
</dbReference>
<dbReference type="RefSeq" id="WP_012149445.1">
    <property type="nucleotide sequence ID" value="NC_009881.1"/>
</dbReference>
<dbReference type="SMR" id="A8GN36"/>
<dbReference type="STRING" id="293614.A1C_02570"/>
<dbReference type="KEGG" id="rak:A1C_02570"/>
<dbReference type="eggNOG" id="COG0109">
    <property type="taxonomic scope" value="Bacteria"/>
</dbReference>
<dbReference type="HOGENOM" id="CLU_029631_0_2_5"/>
<dbReference type="UniPathway" id="UPA00834">
    <property type="reaction ID" value="UER00712"/>
</dbReference>
<dbReference type="Proteomes" id="UP000006830">
    <property type="component" value="Chromosome"/>
</dbReference>
<dbReference type="GO" id="GO:0005886">
    <property type="term" value="C:plasma membrane"/>
    <property type="evidence" value="ECO:0007669"/>
    <property type="project" value="UniProtKB-SubCell"/>
</dbReference>
<dbReference type="GO" id="GO:0008495">
    <property type="term" value="F:protoheme IX farnesyltransferase activity"/>
    <property type="evidence" value="ECO:0007669"/>
    <property type="project" value="UniProtKB-UniRule"/>
</dbReference>
<dbReference type="GO" id="GO:0048034">
    <property type="term" value="P:heme O biosynthetic process"/>
    <property type="evidence" value="ECO:0007669"/>
    <property type="project" value="UniProtKB-UniRule"/>
</dbReference>
<dbReference type="CDD" id="cd13957">
    <property type="entry name" value="PT_UbiA_Cox10"/>
    <property type="match status" value="1"/>
</dbReference>
<dbReference type="FunFam" id="1.10.357.140:FF:000001">
    <property type="entry name" value="Protoheme IX farnesyltransferase"/>
    <property type="match status" value="1"/>
</dbReference>
<dbReference type="Gene3D" id="1.10.357.140">
    <property type="entry name" value="UbiA prenyltransferase"/>
    <property type="match status" value="1"/>
</dbReference>
<dbReference type="HAMAP" id="MF_00154">
    <property type="entry name" value="CyoE_CtaB"/>
    <property type="match status" value="1"/>
</dbReference>
<dbReference type="InterPro" id="IPR006369">
    <property type="entry name" value="Protohaem_IX_farnesylTrfase"/>
</dbReference>
<dbReference type="InterPro" id="IPR000537">
    <property type="entry name" value="UbiA_prenyltransferase"/>
</dbReference>
<dbReference type="InterPro" id="IPR030470">
    <property type="entry name" value="UbiA_prenylTrfase_CS"/>
</dbReference>
<dbReference type="InterPro" id="IPR044878">
    <property type="entry name" value="UbiA_sf"/>
</dbReference>
<dbReference type="NCBIfam" id="TIGR01473">
    <property type="entry name" value="cyoE_ctaB"/>
    <property type="match status" value="1"/>
</dbReference>
<dbReference type="NCBIfam" id="NF003349">
    <property type="entry name" value="PRK04375.1-2"/>
    <property type="match status" value="1"/>
</dbReference>
<dbReference type="PANTHER" id="PTHR43448:SF7">
    <property type="entry name" value="4-HYDROXYBENZOATE SOLANESYLTRANSFERASE"/>
    <property type="match status" value="1"/>
</dbReference>
<dbReference type="PANTHER" id="PTHR43448">
    <property type="entry name" value="PROTOHEME IX FARNESYLTRANSFERASE, MITOCHONDRIAL"/>
    <property type="match status" value="1"/>
</dbReference>
<dbReference type="Pfam" id="PF01040">
    <property type="entry name" value="UbiA"/>
    <property type="match status" value="1"/>
</dbReference>
<dbReference type="PROSITE" id="PS00943">
    <property type="entry name" value="UBIA"/>
    <property type="match status" value="1"/>
</dbReference>
<keyword id="KW-0997">Cell inner membrane</keyword>
<keyword id="KW-1003">Cell membrane</keyword>
<keyword id="KW-0350">Heme biosynthesis</keyword>
<keyword id="KW-0472">Membrane</keyword>
<keyword id="KW-0808">Transferase</keyword>
<keyword id="KW-0812">Transmembrane</keyword>
<keyword id="KW-1133">Transmembrane helix</keyword>
<feature type="chain" id="PRO_1000011354" description="Protoheme IX farnesyltransferase">
    <location>
        <begin position="1"/>
        <end position="305"/>
    </location>
</feature>
<feature type="transmembrane region" description="Helical" evidence="1">
    <location>
        <begin position="31"/>
        <end position="51"/>
    </location>
</feature>
<feature type="transmembrane region" description="Helical" evidence="1">
    <location>
        <begin position="52"/>
        <end position="72"/>
    </location>
</feature>
<feature type="transmembrane region" description="Helical" evidence="1">
    <location>
        <begin position="102"/>
        <end position="119"/>
    </location>
</feature>
<feature type="transmembrane region" description="Helical" evidence="1">
    <location>
        <begin position="123"/>
        <end position="145"/>
    </location>
</feature>
<feature type="transmembrane region" description="Helical" evidence="1">
    <location>
        <begin position="151"/>
        <end position="171"/>
    </location>
</feature>
<feature type="transmembrane region" description="Helical" evidence="1">
    <location>
        <begin position="179"/>
        <end position="199"/>
    </location>
</feature>
<feature type="transmembrane region" description="Helical" evidence="1">
    <location>
        <begin position="218"/>
        <end position="238"/>
    </location>
</feature>
<feature type="transmembrane region" description="Helical" evidence="1">
    <location>
        <begin position="240"/>
        <end position="260"/>
    </location>
</feature>
<feature type="transmembrane region" description="Helical" evidence="1">
    <location>
        <begin position="281"/>
        <end position="301"/>
    </location>
</feature>
<name>COXX_RICAH</name>
<reference key="1">
    <citation type="submission" date="2007-09" db="EMBL/GenBank/DDBJ databases">
        <title>Complete genome sequence of Rickettsia akari.</title>
        <authorList>
            <person name="Madan A."/>
            <person name="Fahey J."/>
            <person name="Helton E."/>
            <person name="Ketteman M."/>
            <person name="Madan A."/>
            <person name="Rodrigues S."/>
            <person name="Sanchez A."/>
            <person name="Whiting M."/>
            <person name="Dasch G."/>
            <person name="Eremeeva M."/>
        </authorList>
    </citation>
    <scope>NUCLEOTIDE SEQUENCE [LARGE SCALE GENOMIC DNA]</scope>
    <source>
        <strain>Hartford</strain>
    </source>
</reference>
<sequence length="305" mass="34412">MSSLVTQIDLDKINHSQSTVKDYILLMKPRVMSLVMFTGFVGMWLAPYSVHPFIAVIVLACISLGAGSAGAINMWYDRDIDSLMKRTQKRPLVRGAIEPDEALSFGLITGFFAVFFMALCVNLLASFLLLFTIFYYICIYTIWLKRRSIQNIVIGGVSGALPPVIGYAAVSNTISLESIILFLIIFIWTPPHSWALALFCNDDYKNCKVPMMPTVKGILYTKEQILIYSILLFLVSLMPFFIGMNNFIYLIIAGMLGLVFLYYSGSLFYDTPDNKQAKRLFAYSIFYLFFIFLLLSSTSTISNIS</sequence>
<accession>A8GN36</accession>
<proteinExistence type="inferred from homology"/>
<gene>
    <name evidence="1" type="primary">ctaB</name>
    <name type="ordered locus">A1C_02570</name>
</gene>